<protein>
    <recommendedName>
        <fullName evidence="1">Glutamate 5-kinase</fullName>
        <ecNumber evidence="1">2.7.2.11</ecNumber>
    </recommendedName>
    <alternativeName>
        <fullName evidence="1">Gamma-glutamyl kinase</fullName>
        <shortName evidence="1">GK</shortName>
    </alternativeName>
</protein>
<comment type="function">
    <text evidence="1">Catalyzes the transfer of a phosphate group to glutamate to form L-glutamate 5-phosphate.</text>
</comment>
<comment type="catalytic activity">
    <reaction evidence="1">
        <text>L-glutamate + ATP = L-glutamyl 5-phosphate + ADP</text>
        <dbReference type="Rhea" id="RHEA:14877"/>
        <dbReference type="ChEBI" id="CHEBI:29985"/>
        <dbReference type="ChEBI" id="CHEBI:30616"/>
        <dbReference type="ChEBI" id="CHEBI:58274"/>
        <dbReference type="ChEBI" id="CHEBI:456216"/>
        <dbReference type="EC" id="2.7.2.11"/>
    </reaction>
</comment>
<comment type="pathway">
    <text evidence="1">Amino-acid biosynthesis; L-proline biosynthesis; L-glutamate 5-semialdehyde from L-glutamate: step 1/2.</text>
</comment>
<comment type="subcellular location">
    <subcellularLocation>
        <location evidence="1">Cytoplasm</location>
    </subcellularLocation>
</comment>
<comment type="similarity">
    <text evidence="1">Belongs to the glutamate 5-kinase family.</text>
</comment>
<dbReference type="EC" id="2.7.2.11" evidence="1"/>
<dbReference type="EMBL" id="CP000026">
    <property type="protein sequence ID" value="AAV78314.1"/>
    <property type="molecule type" value="Genomic_DNA"/>
</dbReference>
<dbReference type="RefSeq" id="WP_001285277.1">
    <property type="nucleotide sequence ID" value="NC_006511.1"/>
</dbReference>
<dbReference type="SMR" id="Q5PF68"/>
<dbReference type="KEGG" id="spt:SPA2434"/>
<dbReference type="HOGENOM" id="CLU_025400_2_0_6"/>
<dbReference type="UniPathway" id="UPA00098">
    <property type="reaction ID" value="UER00359"/>
</dbReference>
<dbReference type="Proteomes" id="UP000008185">
    <property type="component" value="Chromosome"/>
</dbReference>
<dbReference type="GO" id="GO:0005829">
    <property type="term" value="C:cytosol"/>
    <property type="evidence" value="ECO:0007669"/>
    <property type="project" value="TreeGrafter"/>
</dbReference>
<dbReference type="GO" id="GO:0005524">
    <property type="term" value="F:ATP binding"/>
    <property type="evidence" value="ECO:0007669"/>
    <property type="project" value="UniProtKB-KW"/>
</dbReference>
<dbReference type="GO" id="GO:0004349">
    <property type="term" value="F:glutamate 5-kinase activity"/>
    <property type="evidence" value="ECO:0007669"/>
    <property type="project" value="UniProtKB-UniRule"/>
</dbReference>
<dbReference type="GO" id="GO:0003723">
    <property type="term" value="F:RNA binding"/>
    <property type="evidence" value="ECO:0007669"/>
    <property type="project" value="InterPro"/>
</dbReference>
<dbReference type="GO" id="GO:0055129">
    <property type="term" value="P:L-proline biosynthetic process"/>
    <property type="evidence" value="ECO:0007669"/>
    <property type="project" value="UniProtKB-UniRule"/>
</dbReference>
<dbReference type="CDD" id="cd04242">
    <property type="entry name" value="AAK_G5K_ProB"/>
    <property type="match status" value="1"/>
</dbReference>
<dbReference type="CDD" id="cd21157">
    <property type="entry name" value="PUA_G5K"/>
    <property type="match status" value="1"/>
</dbReference>
<dbReference type="FunFam" id="2.30.130.10:FF:000003">
    <property type="entry name" value="Glutamate 5-kinase"/>
    <property type="match status" value="1"/>
</dbReference>
<dbReference type="FunFam" id="3.40.1160.10:FF:000006">
    <property type="entry name" value="Glutamate 5-kinase"/>
    <property type="match status" value="1"/>
</dbReference>
<dbReference type="Gene3D" id="3.40.1160.10">
    <property type="entry name" value="Acetylglutamate kinase-like"/>
    <property type="match status" value="2"/>
</dbReference>
<dbReference type="Gene3D" id="2.30.130.10">
    <property type="entry name" value="PUA domain"/>
    <property type="match status" value="1"/>
</dbReference>
<dbReference type="HAMAP" id="MF_00456">
    <property type="entry name" value="ProB"/>
    <property type="match status" value="1"/>
</dbReference>
<dbReference type="InterPro" id="IPR036393">
    <property type="entry name" value="AceGlu_kinase-like_sf"/>
</dbReference>
<dbReference type="InterPro" id="IPR001048">
    <property type="entry name" value="Asp/Glu/Uridylate_kinase"/>
</dbReference>
<dbReference type="InterPro" id="IPR041739">
    <property type="entry name" value="G5K_ProB"/>
</dbReference>
<dbReference type="InterPro" id="IPR001057">
    <property type="entry name" value="Glu/AcGlu_kinase"/>
</dbReference>
<dbReference type="InterPro" id="IPR011529">
    <property type="entry name" value="Glu_5kinase"/>
</dbReference>
<dbReference type="InterPro" id="IPR005715">
    <property type="entry name" value="Glu_5kinase/COase_Synthase"/>
</dbReference>
<dbReference type="InterPro" id="IPR019797">
    <property type="entry name" value="Glutamate_5-kinase_CS"/>
</dbReference>
<dbReference type="InterPro" id="IPR002478">
    <property type="entry name" value="PUA"/>
</dbReference>
<dbReference type="InterPro" id="IPR015947">
    <property type="entry name" value="PUA-like_sf"/>
</dbReference>
<dbReference type="InterPro" id="IPR036974">
    <property type="entry name" value="PUA_sf"/>
</dbReference>
<dbReference type="NCBIfam" id="TIGR01027">
    <property type="entry name" value="proB"/>
    <property type="match status" value="1"/>
</dbReference>
<dbReference type="PANTHER" id="PTHR43654">
    <property type="entry name" value="GLUTAMATE 5-KINASE"/>
    <property type="match status" value="1"/>
</dbReference>
<dbReference type="PANTHER" id="PTHR43654:SF1">
    <property type="entry name" value="ISOPENTENYL PHOSPHATE KINASE"/>
    <property type="match status" value="1"/>
</dbReference>
<dbReference type="Pfam" id="PF00696">
    <property type="entry name" value="AA_kinase"/>
    <property type="match status" value="1"/>
</dbReference>
<dbReference type="Pfam" id="PF01472">
    <property type="entry name" value="PUA"/>
    <property type="match status" value="1"/>
</dbReference>
<dbReference type="PIRSF" id="PIRSF000729">
    <property type="entry name" value="GK"/>
    <property type="match status" value="1"/>
</dbReference>
<dbReference type="PRINTS" id="PR00474">
    <property type="entry name" value="GLU5KINASE"/>
</dbReference>
<dbReference type="SMART" id="SM00359">
    <property type="entry name" value="PUA"/>
    <property type="match status" value="1"/>
</dbReference>
<dbReference type="SUPFAM" id="SSF53633">
    <property type="entry name" value="Carbamate kinase-like"/>
    <property type="match status" value="1"/>
</dbReference>
<dbReference type="SUPFAM" id="SSF88697">
    <property type="entry name" value="PUA domain-like"/>
    <property type="match status" value="1"/>
</dbReference>
<dbReference type="PROSITE" id="PS00902">
    <property type="entry name" value="GLUTAMATE_5_KINASE"/>
    <property type="match status" value="1"/>
</dbReference>
<dbReference type="PROSITE" id="PS50890">
    <property type="entry name" value="PUA"/>
    <property type="match status" value="1"/>
</dbReference>
<accession>Q5PF68</accession>
<gene>
    <name evidence="1" type="primary">proB</name>
    <name type="ordered locus">SPA2434</name>
</gene>
<evidence type="ECO:0000255" key="1">
    <source>
        <dbReference type="HAMAP-Rule" id="MF_00456"/>
    </source>
</evidence>
<proteinExistence type="inferred from homology"/>
<organism>
    <name type="scientific">Salmonella paratyphi A (strain ATCC 9150 / SARB42)</name>
    <dbReference type="NCBI Taxonomy" id="295319"/>
    <lineage>
        <taxon>Bacteria</taxon>
        <taxon>Pseudomonadati</taxon>
        <taxon>Pseudomonadota</taxon>
        <taxon>Gammaproteobacteria</taxon>
        <taxon>Enterobacterales</taxon>
        <taxon>Enterobacteriaceae</taxon>
        <taxon>Salmonella</taxon>
    </lineage>
</organism>
<sequence>MSDSQTLVVKLGTSVLTGGSRRLNRAHIVELVRQCAQLHAAGHRIVIVTSGAIAAGREHLGYPELPATIASKQLLAAVGQSRLIQLWEQLFSIYGIHIGQMLLTRADMEDRERFLNARDTLRALLDNHIVPVINENDAVATAEIKVGDNDNLSALAAILAGADKLLLLTDQQGLFTADPRSNPQAELIKDVYGVDDALRSVAGDSVSGLGTGGMSTKLQAADVACRAGIDTIIASGSKPGVIGDVMEGISVGTRFHAQASPLENRKRWIFGAPPAGEITVDEGATAAMLERGSSLLPKGIKSVTGNFSRGEVIRICNLQGRDIAHGVSRYNSDALRRIAGHHSQQIDAILGYEYGPVAVHRDDMITR</sequence>
<reference key="1">
    <citation type="journal article" date="2004" name="Nat. Genet.">
        <title>Comparison of genome degradation in Paratyphi A and Typhi, human-restricted serovars of Salmonella enterica that cause typhoid.</title>
        <authorList>
            <person name="McClelland M."/>
            <person name="Sanderson K.E."/>
            <person name="Clifton S.W."/>
            <person name="Latreille P."/>
            <person name="Porwollik S."/>
            <person name="Sabo A."/>
            <person name="Meyer R."/>
            <person name="Bieri T."/>
            <person name="Ozersky P."/>
            <person name="McLellan M."/>
            <person name="Harkins C.R."/>
            <person name="Wang C."/>
            <person name="Nguyen C."/>
            <person name="Berghoff A."/>
            <person name="Elliott G."/>
            <person name="Kohlberg S."/>
            <person name="Strong C."/>
            <person name="Du F."/>
            <person name="Carter J."/>
            <person name="Kremizki C."/>
            <person name="Layman D."/>
            <person name="Leonard S."/>
            <person name="Sun H."/>
            <person name="Fulton L."/>
            <person name="Nash W."/>
            <person name="Miner T."/>
            <person name="Minx P."/>
            <person name="Delehaunty K."/>
            <person name="Fronick C."/>
            <person name="Magrini V."/>
            <person name="Nhan M."/>
            <person name="Warren W."/>
            <person name="Florea L."/>
            <person name="Spieth J."/>
            <person name="Wilson R.K."/>
        </authorList>
    </citation>
    <scope>NUCLEOTIDE SEQUENCE [LARGE SCALE GENOMIC DNA]</scope>
    <source>
        <strain>ATCC 9150 / SARB42</strain>
    </source>
</reference>
<name>PROB_SALPA</name>
<keyword id="KW-0028">Amino-acid biosynthesis</keyword>
<keyword id="KW-0067">ATP-binding</keyword>
<keyword id="KW-0963">Cytoplasm</keyword>
<keyword id="KW-0418">Kinase</keyword>
<keyword id="KW-0547">Nucleotide-binding</keyword>
<keyword id="KW-0641">Proline biosynthesis</keyword>
<keyword id="KW-0808">Transferase</keyword>
<feature type="chain" id="PRO_0000109720" description="Glutamate 5-kinase">
    <location>
        <begin position="1"/>
        <end position="367"/>
    </location>
</feature>
<feature type="domain" description="PUA" evidence="1">
    <location>
        <begin position="275"/>
        <end position="353"/>
    </location>
</feature>
<feature type="binding site" evidence="1">
    <location>
        <position position="10"/>
    </location>
    <ligand>
        <name>ATP</name>
        <dbReference type="ChEBI" id="CHEBI:30616"/>
    </ligand>
</feature>
<feature type="binding site" evidence="1">
    <location>
        <position position="50"/>
    </location>
    <ligand>
        <name>substrate</name>
    </ligand>
</feature>
<feature type="binding site" evidence="1">
    <location>
        <position position="137"/>
    </location>
    <ligand>
        <name>substrate</name>
    </ligand>
</feature>
<feature type="binding site" evidence="1">
    <location>
        <position position="149"/>
    </location>
    <ligand>
        <name>substrate</name>
    </ligand>
</feature>
<feature type="binding site" evidence="1">
    <location>
        <begin position="169"/>
        <end position="170"/>
    </location>
    <ligand>
        <name>ATP</name>
        <dbReference type="ChEBI" id="CHEBI:30616"/>
    </ligand>
</feature>
<feature type="binding site" evidence="1">
    <location>
        <begin position="211"/>
        <end position="217"/>
    </location>
    <ligand>
        <name>ATP</name>
        <dbReference type="ChEBI" id="CHEBI:30616"/>
    </ligand>
</feature>